<evidence type="ECO:0000250" key="1"/>
<evidence type="ECO:0000255" key="2"/>
<evidence type="ECO:0000255" key="3">
    <source>
        <dbReference type="PROSITE-ProRule" id="PRU01240"/>
    </source>
</evidence>
<evidence type="ECO:0000305" key="4"/>
<feature type="signal peptide" evidence="2">
    <location>
        <begin position="1"/>
        <end position="21"/>
    </location>
</feature>
<feature type="propeptide" id="PRO_0000406996" evidence="1">
    <location>
        <begin position="22"/>
        <end position="125"/>
    </location>
</feature>
<feature type="chain" id="PRO_0000406997" description="Alkaline protease 1">
    <location>
        <begin position="126"/>
        <end position="403"/>
    </location>
</feature>
<feature type="domain" description="Inhibitor I9" evidence="2">
    <location>
        <begin position="36"/>
        <end position="120"/>
    </location>
</feature>
<feature type="domain" description="Peptidase S8" evidence="3">
    <location>
        <begin position="130"/>
        <end position="403"/>
    </location>
</feature>
<feature type="active site" description="Charge relay system" evidence="3">
    <location>
        <position position="162"/>
    </location>
</feature>
<feature type="active site" description="Charge relay system" evidence="3">
    <location>
        <position position="193"/>
    </location>
</feature>
<feature type="active site" description="Charge relay system" evidence="3">
    <location>
        <position position="349"/>
    </location>
</feature>
<feature type="glycosylation site" description="N-linked (GlcNAc...) asparagine" evidence="2">
    <location>
        <position position="253"/>
    </location>
</feature>
<dbReference type="EC" id="3.4.21.63"/>
<dbReference type="EMBL" id="AF324246">
    <property type="protein sequence ID" value="AAK52852.1"/>
    <property type="molecule type" value="Genomic_DNA"/>
</dbReference>
<dbReference type="EMBL" id="EQ963473">
    <property type="protein sequence ID" value="EED55509.1"/>
    <property type="molecule type" value="Genomic_DNA"/>
</dbReference>
<dbReference type="RefSeq" id="XP_002374291.1">
    <property type="nucleotide sequence ID" value="XM_002374250.1"/>
</dbReference>
<dbReference type="SMR" id="B8N106"/>
<dbReference type="STRING" id="332952.B8N106"/>
<dbReference type="Allergome" id="81">
    <property type="allergen name" value="Asp fl 13"/>
</dbReference>
<dbReference type="MEROPS" id="S08.053"/>
<dbReference type="GlyCosmos" id="B8N106">
    <property type="glycosylation" value="1 site, No reported glycans"/>
</dbReference>
<dbReference type="EnsemblFungi" id="EED55509">
    <property type="protein sequence ID" value="EED55509"/>
    <property type="gene ID" value="AFLA_027810"/>
</dbReference>
<dbReference type="VEuPathDB" id="FungiDB:AFLA_000633"/>
<dbReference type="eggNOG" id="KOG1153">
    <property type="taxonomic scope" value="Eukaryota"/>
</dbReference>
<dbReference type="HOGENOM" id="CLU_011263_1_4_1"/>
<dbReference type="OMA" id="LRWENTR"/>
<dbReference type="BRENDA" id="3.4.21.63">
    <property type="organism ID" value="506"/>
</dbReference>
<dbReference type="GO" id="GO:0005576">
    <property type="term" value="C:extracellular region"/>
    <property type="evidence" value="ECO:0007669"/>
    <property type="project" value="UniProtKB-SubCell"/>
</dbReference>
<dbReference type="GO" id="GO:0004252">
    <property type="term" value="F:serine-type endopeptidase activity"/>
    <property type="evidence" value="ECO:0007669"/>
    <property type="project" value="InterPro"/>
</dbReference>
<dbReference type="GO" id="GO:0006508">
    <property type="term" value="P:proteolysis"/>
    <property type="evidence" value="ECO:0007669"/>
    <property type="project" value="UniProtKB-KW"/>
</dbReference>
<dbReference type="CDD" id="cd04077">
    <property type="entry name" value="Peptidases_S8_PCSK9_ProteinaseK_like"/>
    <property type="match status" value="1"/>
</dbReference>
<dbReference type="FunFam" id="3.30.70.80:FF:000008">
    <property type="entry name" value="Alkaline protease 1"/>
    <property type="match status" value="1"/>
</dbReference>
<dbReference type="FunFam" id="3.40.50.200:FF:000014">
    <property type="entry name" value="Proteinase K"/>
    <property type="match status" value="1"/>
</dbReference>
<dbReference type="Gene3D" id="3.30.70.80">
    <property type="entry name" value="Peptidase S8 propeptide/proteinase inhibitor I9"/>
    <property type="match status" value="1"/>
</dbReference>
<dbReference type="Gene3D" id="3.40.50.200">
    <property type="entry name" value="Peptidase S8/S53 domain"/>
    <property type="match status" value="1"/>
</dbReference>
<dbReference type="InterPro" id="IPR034193">
    <property type="entry name" value="PCSK9_ProteinaseK-like"/>
</dbReference>
<dbReference type="InterPro" id="IPR000209">
    <property type="entry name" value="Peptidase_S8/S53_dom"/>
</dbReference>
<dbReference type="InterPro" id="IPR036852">
    <property type="entry name" value="Peptidase_S8/S53_dom_sf"/>
</dbReference>
<dbReference type="InterPro" id="IPR023827">
    <property type="entry name" value="Peptidase_S8_Asp-AS"/>
</dbReference>
<dbReference type="InterPro" id="IPR022398">
    <property type="entry name" value="Peptidase_S8_His-AS"/>
</dbReference>
<dbReference type="InterPro" id="IPR023828">
    <property type="entry name" value="Peptidase_S8_Ser-AS"/>
</dbReference>
<dbReference type="InterPro" id="IPR050131">
    <property type="entry name" value="Peptidase_S8_subtilisin-like"/>
</dbReference>
<dbReference type="InterPro" id="IPR015500">
    <property type="entry name" value="Peptidase_S8_subtilisin-rel"/>
</dbReference>
<dbReference type="InterPro" id="IPR010259">
    <property type="entry name" value="S8pro/Inhibitor_I9"/>
</dbReference>
<dbReference type="InterPro" id="IPR037045">
    <property type="entry name" value="S8pro/Inhibitor_I9_sf"/>
</dbReference>
<dbReference type="PANTHER" id="PTHR43806:SF58">
    <property type="entry name" value="ALKALINE PROTEASE 1-RELATED"/>
    <property type="match status" value="1"/>
</dbReference>
<dbReference type="PANTHER" id="PTHR43806">
    <property type="entry name" value="PEPTIDASE S8"/>
    <property type="match status" value="1"/>
</dbReference>
<dbReference type="Pfam" id="PF05922">
    <property type="entry name" value="Inhibitor_I9"/>
    <property type="match status" value="1"/>
</dbReference>
<dbReference type="Pfam" id="PF00082">
    <property type="entry name" value="Peptidase_S8"/>
    <property type="match status" value="1"/>
</dbReference>
<dbReference type="PRINTS" id="PR00723">
    <property type="entry name" value="SUBTILISIN"/>
</dbReference>
<dbReference type="SUPFAM" id="SSF54897">
    <property type="entry name" value="Protease propeptides/inhibitors"/>
    <property type="match status" value="1"/>
</dbReference>
<dbReference type="SUPFAM" id="SSF52743">
    <property type="entry name" value="Subtilisin-like"/>
    <property type="match status" value="1"/>
</dbReference>
<dbReference type="PROSITE" id="PS51892">
    <property type="entry name" value="SUBTILASE"/>
    <property type="match status" value="1"/>
</dbReference>
<dbReference type="PROSITE" id="PS00136">
    <property type="entry name" value="SUBTILASE_ASP"/>
    <property type="match status" value="1"/>
</dbReference>
<dbReference type="PROSITE" id="PS00137">
    <property type="entry name" value="SUBTILASE_HIS"/>
    <property type="match status" value="1"/>
</dbReference>
<dbReference type="PROSITE" id="PS00138">
    <property type="entry name" value="SUBTILASE_SER"/>
    <property type="match status" value="1"/>
</dbReference>
<comment type="function">
    <text evidence="1">Secreted alkaline protease that allows assimilation of proteinaceous substrates.</text>
</comment>
<comment type="catalytic activity">
    <reaction>
        <text>Hydrolysis of proteins with broad specificity, and of Bz-Arg-OEt &gt; Ac-Tyr-OEt. Does not hydrolyze peptide amides.</text>
        <dbReference type="EC" id="3.4.21.63"/>
    </reaction>
</comment>
<comment type="subcellular location">
    <subcellularLocation>
        <location evidence="1">Secreted</location>
    </subcellularLocation>
</comment>
<comment type="allergen">
    <text>Causes an allergic reaction in human.</text>
</comment>
<comment type="similarity">
    <text evidence="4">Belongs to the peptidase S8 family.</text>
</comment>
<name>ORYZ_ASPFN</name>
<sequence length="403" mass="42571">MQSIKRTLLLLGAILPAVLGAPVQETRRAAEKLPGKYIVTFKPGIDEAKIQEHTTWATNIHQRSLERRGATGGDLPVGIERNYKINKFAAYAGSFDDATIEEIRKNEDVAYVEEDQIYYLDGLTTQKSAPWGLGSISHKGQQSTDYIYDTSAGEGTYAYVVDSGVNVDHEEFEGRASKAYNAAGGQHVDSIGHGTHVSGTIAGKTYGIAKKASILSVKVFQGESSSTSVILDGFNWAANDIVSKKRTSKAAINMSLGGGYSKAFNDAVENAFEQGVLSVVAAGNENSDAGQTSPASAPDAITVAAIQKSNNRASFSNFGKVVDVFAPGQDILSAWIGSSSATNTISGTSMATPHIVGLSLYLAALENLDGPAAVTKRIKELATKDVVKDVKGSPNLLAYNGNA</sequence>
<reference key="1">
    <citation type="submission" date="2000-11" db="EMBL/GenBank/DDBJ databases">
        <title>Characterization of an Aspergillus flavus alkaline protease and its possible role in the infection of maize kernels.</title>
        <authorList>
            <person name="Chen Z."/>
            <person name="Cary J.W."/>
            <person name="Brown R.L."/>
            <person name="Damann K.E."/>
            <person name="Cleveland T.E."/>
        </authorList>
    </citation>
    <scope>NUCLEOTIDE SEQUENCE [GENOMIC DNA]</scope>
</reference>
<reference key="2">
    <citation type="journal article" date="2015" name="Genome Announc.">
        <title>Genome sequence of Aspergillus flavus NRRL 3357, a strain that causes aflatoxin contamination of food and feed.</title>
        <authorList>
            <person name="Nierman W.C."/>
            <person name="Yu J."/>
            <person name="Fedorova-Abrams N.D."/>
            <person name="Losada L."/>
            <person name="Cleveland T.E."/>
            <person name="Bhatnagar D."/>
            <person name="Bennett J.W."/>
            <person name="Dean R."/>
            <person name="Payne G.A."/>
        </authorList>
    </citation>
    <scope>NUCLEOTIDE SEQUENCE [LARGE SCALE GENOMIC DNA]</scope>
    <source>
        <strain>ATCC 200026 / FGSC A1120 / IAM 13836 / NRRL 3357 / JCM 12722 / SRRC 167</strain>
    </source>
</reference>
<accession>B8N106</accession>
<accession>Q71RZ0</accession>
<organism>
    <name type="scientific">Aspergillus flavus (strain ATCC 200026 / FGSC A1120 / IAM 13836 / NRRL 3357 / JCM 12722 / SRRC 167)</name>
    <dbReference type="NCBI Taxonomy" id="332952"/>
    <lineage>
        <taxon>Eukaryota</taxon>
        <taxon>Fungi</taxon>
        <taxon>Dikarya</taxon>
        <taxon>Ascomycota</taxon>
        <taxon>Pezizomycotina</taxon>
        <taxon>Eurotiomycetes</taxon>
        <taxon>Eurotiomycetidae</taxon>
        <taxon>Eurotiales</taxon>
        <taxon>Aspergillaceae</taxon>
        <taxon>Aspergillus</taxon>
        <taxon>Aspergillus subgen. Circumdati</taxon>
    </lineage>
</organism>
<keyword id="KW-0020">Allergen</keyword>
<keyword id="KW-0325">Glycoprotein</keyword>
<keyword id="KW-0378">Hydrolase</keyword>
<keyword id="KW-0645">Protease</keyword>
<keyword id="KW-0964">Secreted</keyword>
<keyword id="KW-0720">Serine protease</keyword>
<keyword id="KW-0732">Signal</keyword>
<keyword id="KW-0865">Zymogen</keyword>
<gene>
    <name type="primary">alp1</name>
    <name type="synonym">alk1</name>
    <name type="synonym">alp</name>
    <name type="ORF">AFLA_027810</name>
</gene>
<proteinExistence type="evidence at protein level"/>
<protein>
    <recommendedName>
        <fullName>Alkaline protease 1</fullName>
        <shortName>ALP</shortName>
        <ecNumber>3.4.21.63</ecNumber>
    </recommendedName>
    <alternativeName>
        <fullName>Aspergillopeptidase B</fullName>
    </alternativeName>
    <alternativeName>
        <fullName>Aspergillus proteinase B</fullName>
    </alternativeName>
    <alternativeName>
        <fullName>Elastase</fullName>
    </alternativeName>
    <alternativeName>
        <fullName>Elastinolytic serine proteinase</fullName>
    </alternativeName>
    <alternativeName>
        <fullName>Oryzin</fullName>
    </alternativeName>
    <allergenName>Asp fl 1</allergenName>
</protein>